<organism>
    <name type="scientific">Burkholderia ambifaria (strain MC40-6)</name>
    <dbReference type="NCBI Taxonomy" id="398577"/>
    <lineage>
        <taxon>Bacteria</taxon>
        <taxon>Pseudomonadati</taxon>
        <taxon>Pseudomonadota</taxon>
        <taxon>Betaproteobacteria</taxon>
        <taxon>Burkholderiales</taxon>
        <taxon>Burkholderiaceae</taxon>
        <taxon>Burkholderia</taxon>
        <taxon>Burkholderia cepacia complex</taxon>
    </lineage>
</organism>
<name>AROB_BURA4</name>
<evidence type="ECO:0000255" key="1">
    <source>
        <dbReference type="HAMAP-Rule" id="MF_00110"/>
    </source>
</evidence>
<sequence length="359" mass="37983">MITVNVDLGERAYPIHIGAGLIGRTELFAPHITGSSVTIVTNTTVDPLYGDALRAALAPLGKRVSTVVLPDGEAYKNWETLNLIFDGLLTERADRKTTLVALGGGVIGDMTGFAAACYMRGVPFIQVPTTLLSQVDSSVGGKTGINHPLGKNMIGAFYQPQAVIADIGALTTLPDRELAAGVAEVIKTGAIADAEFFDWIEANVDALNRREPAALAHAVKRSCEIKASVVAADEREGGLRAILNFGHTFGHAIEAGLGYGEWLHGEAVGCGMVMAADLSVRLGLLDEASRQRLDAVIAAAHLPVRGPALGDARYMELMRVDKKAEAGAIKFILLKRFGDTLITQAPDEAVFATLAQTTR</sequence>
<dbReference type="EC" id="4.2.3.4" evidence="1"/>
<dbReference type="EMBL" id="CP001025">
    <property type="protein sequence ID" value="ACB62822.1"/>
    <property type="molecule type" value="Genomic_DNA"/>
</dbReference>
<dbReference type="RefSeq" id="WP_012362908.1">
    <property type="nucleotide sequence ID" value="NC_010551.1"/>
</dbReference>
<dbReference type="SMR" id="B1YRS4"/>
<dbReference type="KEGG" id="bac:BamMC406_0321"/>
<dbReference type="HOGENOM" id="CLU_001201_0_2_4"/>
<dbReference type="OrthoDB" id="9806583at2"/>
<dbReference type="UniPathway" id="UPA00053">
    <property type="reaction ID" value="UER00085"/>
</dbReference>
<dbReference type="Proteomes" id="UP000001680">
    <property type="component" value="Chromosome 1"/>
</dbReference>
<dbReference type="GO" id="GO:0005737">
    <property type="term" value="C:cytoplasm"/>
    <property type="evidence" value="ECO:0007669"/>
    <property type="project" value="UniProtKB-SubCell"/>
</dbReference>
<dbReference type="GO" id="GO:0003856">
    <property type="term" value="F:3-dehydroquinate synthase activity"/>
    <property type="evidence" value="ECO:0007669"/>
    <property type="project" value="UniProtKB-UniRule"/>
</dbReference>
<dbReference type="GO" id="GO:0046872">
    <property type="term" value="F:metal ion binding"/>
    <property type="evidence" value="ECO:0007669"/>
    <property type="project" value="UniProtKB-KW"/>
</dbReference>
<dbReference type="GO" id="GO:0000166">
    <property type="term" value="F:nucleotide binding"/>
    <property type="evidence" value="ECO:0007669"/>
    <property type="project" value="UniProtKB-KW"/>
</dbReference>
<dbReference type="GO" id="GO:0008652">
    <property type="term" value="P:amino acid biosynthetic process"/>
    <property type="evidence" value="ECO:0007669"/>
    <property type="project" value="UniProtKB-KW"/>
</dbReference>
<dbReference type="GO" id="GO:0009073">
    <property type="term" value="P:aromatic amino acid family biosynthetic process"/>
    <property type="evidence" value="ECO:0007669"/>
    <property type="project" value="UniProtKB-KW"/>
</dbReference>
<dbReference type="GO" id="GO:0009423">
    <property type="term" value="P:chorismate biosynthetic process"/>
    <property type="evidence" value="ECO:0007669"/>
    <property type="project" value="UniProtKB-UniRule"/>
</dbReference>
<dbReference type="CDD" id="cd08195">
    <property type="entry name" value="DHQS"/>
    <property type="match status" value="1"/>
</dbReference>
<dbReference type="FunFam" id="3.40.50.1970:FF:000001">
    <property type="entry name" value="3-dehydroquinate synthase"/>
    <property type="match status" value="1"/>
</dbReference>
<dbReference type="Gene3D" id="3.40.50.1970">
    <property type="match status" value="1"/>
</dbReference>
<dbReference type="Gene3D" id="1.20.1090.10">
    <property type="entry name" value="Dehydroquinate synthase-like - alpha domain"/>
    <property type="match status" value="1"/>
</dbReference>
<dbReference type="HAMAP" id="MF_00110">
    <property type="entry name" value="DHQ_synthase"/>
    <property type="match status" value="1"/>
</dbReference>
<dbReference type="InterPro" id="IPR050071">
    <property type="entry name" value="Dehydroquinate_synthase"/>
</dbReference>
<dbReference type="InterPro" id="IPR016037">
    <property type="entry name" value="DHQ_synth_AroB"/>
</dbReference>
<dbReference type="InterPro" id="IPR030963">
    <property type="entry name" value="DHQ_synth_fam"/>
</dbReference>
<dbReference type="InterPro" id="IPR030960">
    <property type="entry name" value="DHQS/DOIS_N"/>
</dbReference>
<dbReference type="InterPro" id="IPR056179">
    <property type="entry name" value="DHQS_C"/>
</dbReference>
<dbReference type="NCBIfam" id="TIGR01357">
    <property type="entry name" value="aroB"/>
    <property type="match status" value="1"/>
</dbReference>
<dbReference type="PANTHER" id="PTHR43622">
    <property type="entry name" value="3-DEHYDROQUINATE SYNTHASE"/>
    <property type="match status" value="1"/>
</dbReference>
<dbReference type="PANTHER" id="PTHR43622:SF7">
    <property type="entry name" value="3-DEHYDROQUINATE SYNTHASE, CHLOROPLASTIC"/>
    <property type="match status" value="1"/>
</dbReference>
<dbReference type="Pfam" id="PF01761">
    <property type="entry name" value="DHQ_synthase"/>
    <property type="match status" value="1"/>
</dbReference>
<dbReference type="Pfam" id="PF24621">
    <property type="entry name" value="DHQS_C"/>
    <property type="match status" value="1"/>
</dbReference>
<dbReference type="PIRSF" id="PIRSF001455">
    <property type="entry name" value="DHQ_synth"/>
    <property type="match status" value="1"/>
</dbReference>
<dbReference type="SUPFAM" id="SSF56796">
    <property type="entry name" value="Dehydroquinate synthase-like"/>
    <property type="match status" value="1"/>
</dbReference>
<accession>B1YRS4</accession>
<proteinExistence type="inferred from homology"/>
<comment type="function">
    <text evidence="1">Catalyzes the conversion of 3-deoxy-D-arabino-heptulosonate 7-phosphate (DAHP) to dehydroquinate (DHQ).</text>
</comment>
<comment type="catalytic activity">
    <reaction evidence="1">
        <text>7-phospho-2-dehydro-3-deoxy-D-arabino-heptonate = 3-dehydroquinate + phosphate</text>
        <dbReference type="Rhea" id="RHEA:21968"/>
        <dbReference type="ChEBI" id="CHEBI:32364"/>
        <dbReference type="ChEBI" id="CHEBI:43474"/>
        <dbReference type="ChEBI" id="CHEBI:58394"/>
        <dbReference type="EC" id="4.2.3.4"/>
    </reaction>
</comment>
<comment type="cofactor">
    <cofactor evidence="1">
        <name>Co(2+)</name>
        <dbReference type="ChEBI" id="CHEBI:48828"/>
    </cofactor>
    <cofactor evidence="1">
        <name>Zn(2+)</name>
        <dbReference type="ChEBI" id="CHEBI:29105"/>
    </cofactor>
    <text evidence="1">Binds 1 divalent metal cation per subunit. Can use either Co(2+) or Zn(2+).</text>
</comment>
<comment type="cofactor">
    <cofactor evidence="1">
        <name>NAD(+)</name>
        <dbReference type="ChEBI" id="CHEBI:57540"/>
    </cofactor>
</comment>
<comment type="pathway">
    <text evidence="1">Metabolic intermediate biosynthesis; chorismate biosynthesis; chorismate from D-erythrose 4-phosphate and phosphoenolpyruvate: step 2/7.</text>
</comment>
<comment type="subcellular location">
    <subcellularLocation>
        <location evidence="1">Cytoplasm</location>
    </subcellularLocation>
</comment>
<comment type="similarity">
    <text evidence="1">Belongs to the sugar phosphate cyclases superfamily. Dehydroquinate synthase family.</text>
</comment>
<protein>
    <recommendedName>
        <fullName evidence="1">3-dehydroquinate synthase</fullName>
        <shortName evidence="1">DHQS</shortName>
        <ecNumber evidence="1">4.2.3.4</ecNumber>
    </recommendedName>
</protein>
<keyword id="KW-0028">Amino-acid biosynthesis</keyword>
<keyword id="KW-0057">Aromatic amino acid biosynthesis</keyword>
<keyword id="KW-0170">Cobalt</keyword>
<keyword id="KW-0963">Cytoplasm</keyword>
<keyword id="KW-0456">Lyase</keyword>
<keyword id="KW-0479">Metal-binding</keyword>
<keyword id="KW-0520">NAD</keyword>
<keyword id="KW-0547">Nucleotide-binding</keyword>
<keyword id="KW-0862">Zinc</keyword>
<reference key="1">
    <citation type="submission" date="2008-04" db="EMBL/GenBank/DDBJ databases">
        <title>Complete sequence of chromosome 1 of Burkholderia ambifaria MC40-6.</title>
        <authorList>
            <person name="Copeland A."/>
            <person name="Lucas S."/>
            <person name="Lapidus A."/>
            <person name="Glavina del Rio T."/>
            <person name="Dalin E."/>
            <person name="Tice H."/>
            <person name="Pitluck S."/>
            <person name="Chain P."/>
            <person name="Malfatti S."/>
            <person name="Shin M."/>
            <person name="Vergez L."/>
            <person name="Lang D."/>
            <person name="Schmutz J."/>
            <person name="Larimer F."/>
            <person name="Land M."/>
            <person name="Hauser L."/>
            <person name="Kyrpides N."/>
            <person name="Lykidis A."/>
            <person name="Ramette A."/>
            <person name="Konstantinidis K."/>
            <person name="Tiedje J."/>
            <person name="Richardson P."/>
        </authorList>
    </citation>
    <scope>NUCLEOTIDE SEQUENCE [LARGE SCALE GENOMIC DNA]</scope>
    <source>
        <strain>MC40-6</strain>
    </source>
</reference>
<gene>
    <name evidence="1" type="primary">aroB</name>
    <name type="ordered locus">BamMC406_0321</name>
</gene>
<feature type="chain" id="PRO_1000094468" description="3-dehydroquinate synthase">
    <location>
        <begin position="1"/>
        <end position="359"/>
    </location>
</feature>
<feature type="binding site" evidence="1">
    <location>
        <begin position="71"/>
        <end position="76"/>
    </location>
    <ligand>
        <name>NAD(+)</name>
        <dbReference type="ChEBI" id="CHEBI:57540"/>
    </ligand>
</feature>
<feature type="binding site" evidence="1">
    <location>
        <begin position="105"/>
        <end position="109"/>
    </location>
    <ligand>
        <name>NAD(+)</name>
        <dbReference type="ChEBI" id="CHEBI:57540"/>
    </ligand>
</feature>
<feature type="binding site" evidence="1">
    <location>
        <begin position="129"/>
        <end position="130"/>
    </location>
    <ligand>
        <name>NAD(+)</name>
        <dbReference type="ChEBI" id="CHEBI:57540"/>
    </ligand>
</feature>
<feature type="binding site" evidence="1">
    <location>
        <position position="142"/>
    </location>
    <ligand>
        <name>NAD(+)</name>
        <dbReference type="ChEBI" id="CHEBI:57540"/>
    </ligand>
</feature>
<feature type="binding site" evidence="1">
    <location>
        <position position="151"/>
    </location>
    <ligand>
        <name>NAD(+)</name>
        <dbReference type="ChEBI" id="CHEBI:57540"/>
    </ligand>
</feature>
<feature type="binding site" evidence="1">
    <location>
        <position position="184"/>
    </location>
    <ligand>
        <name>Zn(2+)</name>
        <dbReference type="ChEBI" id="CHEBI:29105"/>
    </ligand>
</feature>
<feature type="binding site" evidence="1">
    <location>
        <position position="247"/>
    </location>
    <ligand>
        <name>Zn(2+)</name>
        <dbReference type="ChEBI" id="CHEBI:29105"/>
    </ligand>
</feature>
<feature type="binding site" evidence="1">
    <location>
        <position position="264"/>
    </location>
    <ligand>
        <name>Zn(2+)</name>
        <dbReference type="ChEBI" id="CHEBI:29105"/>
    </ligand>
</feature>